<gene>
    <name evidence="1" type="primary">pgi</name>
    <name type="ordered locus">R00483</name>
    <name type="ORF">SMc02163</name>
</gene>
<sequence>MKALVENLKATARETDATDIRAAFAADPNRFSRFSTAFDDLLFDYSKCAVNDRIIDGLEALAKAAKVEEKRDAMFRGDIINITEERAVLHTALRNRSNRPVLVDGKDVMPDVNAVLEAMGKFADDIRSGALKGATGKKITDVVNIGIGGSDLGPVMATLALAPFHDGPRLHFVSNVDGAHIADTLTLLDPETSLFIVASKTFTTIETMTNAATARAFIAGKLGEAAVGHHFAAVSTALDKVGAFGIDAARVFGFWDWVGGRYSIWSAIGLPLMIAIGKENFGRFLDGGHAIDEHFRSAPLRQNIPMLLGLIGFYNRNVLGYPSRAILPYDQRLTRFPAYLQQLDMESNGKGVTLDSQPVEFSTGPVVWGEPGTNGQHAFYQLIHQGTDVIPAEFMIAANGHEKDLRHQHQLLMANCLAQSEALMKGRTLAEAKAQLTSKGMDDAKADKIAPHRVFTGNRPSLTIVYDQLDPFALGRLIALYEHRVFVEGALFNINSFDQWGVELGKELATGLLPVIEGKESAEGHDSSTAGLVAALLKAAR</sequence>
<protein>
    <recommendedName>
        <fullName evidence="1">Glucose-6-phosphate isomerase</fullName>
        <shortName evidence="1">GPI</shortName>
        <ecNumber evidence="1">5.3.1.9</ecNumber>
    </recommendedName>
    <alternativeName>
        <fullName evidence="1">Phosphoglucose isomerase</fullName>
        <shortName evidence="1">PGI</shortName>
    </alternativeName>
    <alternativeName>
        <fullName evidence="1">Phosphohexose isomerase</fullName>
        <shortName evidence="1">PHI</shortName>
    </alternativeName>
</protein>
<accession>Q92SC4</accession>
<organism>
    <name type="scientific">Rhizobium meliloti (strain 1021)</name>
    <name type="common">Ensifer meliloti</name>
    <name type="synonym">Sinorhizobium meliloti</name>
    <dbReference type="NCBI Taxonomy" id="266834"/>
    <lineage>
        <taxon>Bacteria</taxon>
        <taxon>Pseudomonadati</taxon>
        <taxon>Pseudomonadota</taxon>
        <taxon>Alphaproteobacteria</taxon>
        <taxon>Hyphomicrobiales</taxon>
        <taxon>Rhizobiaceae</taxon>
        <taxon>Sinorhizobium/Ensifer group</taxon>
        <taxon>Sinorhizobium</taxon>
    </lineage>
</organism>
<name>G6PI_RHIME</name>
<proteinExistence type="inferred from homology"/>
<comment type="function">
    <text evidence="1">Catalyzes the reversible isomerization of glucose-6-phosphate to fructose-6-phosphate.</text>
</comment>
<comment type="catalytic activity">
    <reaction evidence="1">
        <text>alpha-D-glucose 6-phosphate = beta-D-fructose 6-phosphate</text>
        <dbReference type="Rhea" id="RHEA:11816"/>
        <dbReference type="ChEBI" id="CHEBI:57634"/>
        <dbReference type="ChEBI" id="CHEBI:58225"/>
        <dbReference type="EC" id="5.3.1.9"/>
    </reaction>
</comment>
<comment type="pathway">
    <text evidence="1">Carbohydrate biosynthesis; gluconeogenesis.</text>
</comment>
<comment type="pathway">
    <text evidence="1">Carbohydrate degradation; glycolysis; D-glyceraldehyde 3-phosphate and glycerone phosphate from D-glucose: step 2/4.</text>
</comment>
<comment type="subcellular location">
    <subcellularLocation>
        <location evidence="1">Cytoplasm</location>
    </subcellularLocation>
</comment>
<comment type="similarity">
    <text evidence="1">Belongs to the GPI family.</text>
</comment>
<feature type="chain" id="PRO_0000180719" description="Glucose-6-phosphate isomerase">
    <location>
        <begin position="1"/>
        <end position="541"/>
    </location>
</feature>
<feature type="active site" description="Proton donor" evidence="1">
    <location>
        <position position="346"/>
    </location>
</feature>
<feature type="active site" evidence="1">
    <location>
        <position position="377"/>
    </location>
</feature>
<feature type="active site" evidence="1">
    <location>
        <position position="506"/>
    </location>
</feature>
<evidence type="ECO:0000255" key="1">
    <source>
        <dbReference type="HAMAP-Rule" id="MF_00473"/>
    </source>
</evidence>
<reference key="1">
    <citation type="journal article" date="2001" name="Proc. Natl. Acad. Sci. U.S.A.">
        <title>Analysis of the chromosome sequence of the legume symbiont Sinorhizobium meliloti strain 1021.</title>
        <authorList>
            <person name="Capela D."/>
            <person name="Barloy-Hubler F."/>
            <person name="Gouzy J."/>
            <person name="Bothe G."/>
            <person name="Ampe F."/>
            <person name="Batut J."/>
            <person name="Boistard P."/>
            <person name="Becker A."/>
            <person name="Boutry M."/>
            <person name="Cadieu E."/>
            <person name="Dreano S."/>
            <person name="Gloux S."/>
            <person name="Godrie T."/>
            <person name="Goffeau A."/>
            <person name="Kahn D."/>
            <person name="Kiss E."/>
            <person name="Lelaure V."/>
            <person name="Masuy D."/>
            <person name="Pohl T."/>
            <person name="Portetelle D."/>
            <person name="Puehler A."/>
            <person name="Purnelle B."/>
            <person name="Ramsperger U."/>
            <person name="Renard C."/>
            <person name="Thebault P."/>
            <person name="Vandenbol M."/>
            <person name="Weidner S."/>
            <person name="Galibert F."/>
        </authorList>
    </citation>
    <scope>NUCLEOTIDE SEQUENCE [LARGE SCALE GENOMIC DNA]</scope>
    <source>
        <strain>1021</strain>
    </source>
</reference>
<reference key="2">
    <citation type="journal article" date="2001" name="Science">
        <title>The composite genome of the legume symbiont Sinorhizobium meliloti.</title>
        <authorList>
            <person name="Galibert F."/>
            <person name="Finan T.M."/>
            <person name="Long S.R."/>
            <person name="Puehler A."/>
            <person name="Abola P."/>
            <person name="Ampe F."/>
            <person name="Barloy-Hubler F."/>
            <person name="Barnett M.J."/>
            <person name="Becker A."/>
            <person name="Boistard P."/>
            <person name="Bothe G."/>
            <person name="Boutry M."/>
            <person name="Bowser L."/>
            <person name="Buhrmester J."/>
            <person name="Cadieu E."/>
            <person name="Capela D."/>
            <person name="Chain P."/>
            <person name="Cowie A."/>
            <person name="Davis R.W."/>
            <person name="Dreano S."/>
            <person name="Federspiel N.A."/>
            <person name="Fisher R.F."/>
            <person name="Gloux S."/>
            <person name="Godrie T."/>
            <person name="Goffeau A."/>
            <person name="Golding B."/>
            <person name="Gouzy J."/>
            <person name="Gurjal M."/>
            <person name="Hernandez-Lucas I."/>
            <person name="Hong A."/>
            <person name="Huizar L."/>
            <person name="Hyman R.W."/>
            <person name="Jones T."/>
            <person name="Kahn D."/>
            <person name="Kahn M.L."/>
            <person name="Kalman S."/>
            <person name="Keating D.H."/>
            <person name="Kiss E."/>
            <person name="Komp C."/>
            <person name="Lelaure V."/>
            <person name="Masuy D."/>
            <person name="Palm C."/>
            <person name="Peck M.C."/>
            <person name="Pohl T.M."/>
            <person name="Portetelle D."/>
            <person name="Purnelle B."/>
            <person name="Ramsperger U."/>
            <person name="Surzycki R."/>
            <person name="Thebault P."/>
            <person name="Vandenbol M."/>
            <person name="Vorhoelter F.J."/>
            <person name="Weidner S."/>
            <person name="Wells D.H."/>
            <person name="Wong K."/>
            <person name="Yeh K.-C."/>
            <person name="Batut J."/>
        </authorList>
    </citation>
    <scope>NUCLEOTIDE SEQUENCE [LARGE SCALE GENOMIC DNA]</scope>
    <source>
        <strain>1021</strain>
    </source>
</reference>
<dbReference type="EC" id="5.3.1.9" evidence="1"/>
<dbReference type="EMBL" id="AL591688">
    <property type="protein sequence ID" value="CAC41920.1"/>
    <property type="molecule type" value="Genomic_DNA"/>
</dbReference>
<dbReference type="RefSeq" id="NP_384589.1">
    <property type="nucleotide sequence ID" value="NC_003047.1"/>
</dbReference>
<dbReference type="RefSeq" id="WP_010968607.1">
    <property type="nucleotide sequence ID" value="NC_003047.1"/>
</dbReference>
<dbReference type="SMR" id="Q92SC4"/>
<dbReference type="EnsemblBacteria" id="CAC41920">
    <property type="protein sequence ID" value="CAC41920"/>
    <property type="gene ID" value="SMc02163"/>
</dbReference>
<dbReference type="KEGG" id="sme:SMc02163"/>
<dbReference type="PATRIC" id="fig|266834.11.peg.1860"/>
<dbReference type="eggNOG" id="COG0166">
    <property type="taxonomic scope" value="Bacteria"/>
</dbReference>
<dbReference type="HOGENOM" id="CLU_017947_3_1_5"/>
<dbReference type="OrthoDB" id="140919at2"/>
<dbReference type="UniPathway" id="UPA00109">
    <property type="reaction ID" value="UER00181"/>
</dbReference>
<dbReference type="UniPathway" id="UPA00138"/>
<dbReference type="Proteomes" id="UP000001976">
    <property type="component" value="Chromosome"/>
</dbReference>
<dbReference type="GO" id="GO:0005829">
    <property type="term" value="C:cytosol"/>
    <property type="evidence" value="ECO:0007669"/>
    <property type="project" value="TreeGrafter"/>
</dbReference>
<dbReference type="GO" id="GO:0097367">
    <property type="term" value="F:carbohydrate derivative binding"/>
    <property type="evidence" value="ECO:0007669"/>
    <property type="project" value="InterPro"/>
</dbReference>
<dbReference type="GO" id="GO:0004347">
    <property type="term" value="F:glucose-6-phosphate isomerase activity"/>
    <property type="evidence" value="ECO:0007669"/>
    <property type="project" value="UniProtKB-UniRule"/>
</dbReference>
<dbReference type="GO" id="GO:0048029">
    <property type="term" value="F:monosaccharide binding"/>
    <property type="evidence" value="ECO:0007669"/>
    <property type="project" value="TreeGrafter"/>
</dbReference>
<dbReference type="GO" id="GO:0006094">
    <property type="term" value="P:gluconeogenesis"/>
    <property type="evidence" value="ECO:0007669"/>
    <property type="project" value="UniProtKB-UniRule"/>
</dbReference>
<dbReference type="GO" id="GO:0051156">
    <property type="term" value="P:glucose 6-phosphate metabolic process"/>
    <property type="evidence" value="ECO:0007669"/>
    <property type="project" value="TreeGrafter"/>
</dbReference>
<dbReference type="GO" id="GO:0006096">
    <property type="term" value="P:glycolytic process"/>
    <property type="evidence" value="ECO:0007669"/>
    <property type="project" value="UniProtKB-UniRule"/>
</dbReference>
<dbReference type="CDD" id="cd05015">
    <property type="entry name" value="SIS_PGI_1"/>
    <property type="match status" value="1"/>
</dbReference>
<dbReference type="CDD" id="cd05016">
    <property type="entry name" value="SIS_PGI_2"/>
    <property type="match status" value="1"/>
</dbReference>
<dbReference type="FunFam" id="3.40.50.10490:FF:000018">
    <property type="entry name" value="Glucose-6-phosphate isomerase"/>
    <property type="match status" value="1"/>
</dbReference>
<dbReference type="Gene3D" id="1.10.1390.10">
    <property type="match status" value="1"/>
</dbReference>
<dbReference type="Gene3D" id="3.40.50.10490">
    <property type="entry name" value="Glucose-6-phosphate isomerase like protein, domain 1"/>
    <property type="match status" value="2"/>
</dbReference>
<dbReference type="HAMAP" id="MF_00473">
    <property type="entry name" value="G6P_isomerase"/>
    <property type="match status" value="1"/>
</dbReference>
<dbReference type="InterPro" id="IPR001672">
    <property type="entry name" value="G6P_Isomerase"/>
</dbReference>
<dbReference type="InterPro" id="IPR023096">
    <property type="entry name" value="G6P_Isomerase_C"/>
</dbReference>
<dbReference type="InterPro" id="IPR018189">
    <property type="entry name" value="Phosphoglucose_isomerase_CS"/>
</dbReference>
<dbReference type="InterPro" id="IPR046348">
    <property type="entry name" value="SIS_dom_sf"/>
</dbReference>
<dbReference type="InterPro" id="IPR035476">
    <property type="entry name" value="SIS_PGI_1"/>
</dbReference>
<dbReference type="InterPro" id="IPR035482">
    <property type="entry name" value="SIS_PGI_2"/>
</dbReference>
<dbReference type="NCBIfam" id="NF001211">
    <property type="entry name" value="PRK00179.1"/>
    <property type="match status" value="1"/>
</dbReference>
<dbReference type="PANTHER" id="PTHR11469">
    <property type="entry name" value="GLUCOSE-6-PHOSPHATE ISOMERASE"/>
    <property type="match status" value="1"/>
</dbReference>
<dbReference type="PANTHER" id="PTHR11469:SF1">
    <property type="entry name" value="GLUCOSE-6-PHOSPHATE ISOMERASE"/>
    <property type="match status" value="1"/>
</dbReference>
<dbReference type="Pfam" id="PF00342">
    <property type="entry name" value="PGI"/>
    <property type="match status" value="1"/>
</dbReference>
<dbReference type="PRINTS" id="PR00662">
    <property type="entry name" value="G6PISOMERASE"/>
</dbReference>
<dbReference type="SUPFAM" id="SSF53697">
    <property type="entry name" value="SIS domain"/>
    <property type="match status" value="1"/>
</dbReference>
<dbReference type="PROSITE" id="PS00765">
    <property type="entry name" value="P_GLUCOSE_ISOMERASE_1"/>
    <property type="match status" value="1"/>
</dbReference>
<dbReference type="PROSITE" id="PS00174">
    <property type="entry name" value="P_GLUCOSE_ISOMERASE_2"/>
    <property type="match status" value="1"/>
</dbReference>
<dbReference type="PROSITE" id="PS51463">
    <property type="entry name" value="P_GLUCOSE_ISOMERASE_3"/>
    <property type="match status" value="1"/>
</dbReference>
<keyword id="KW-0963">Cytoplasm</keyword>
<keyword id="KW-0312">Gluconeogenesis</keyword>
<keyword id="KW-0324">Glycolysis</keyword>
<keyword id="KW-0413">Isomerase</keyword>
<keyword id="KW-1185">Reference proteome</keyword>